<protein>
    <recommendedName>
        <fullName evidence="1">Putative 4-diphosphocytidyl-2-C-methyl-D-erythritol kinase</fullName>
        <shortName evidence="1">CMK</shortName>
        <ecNumber evidence="1">2.7.1.148</ecNumber>
    </recommendedName>
    <alternativeName>
        <fullName evidence="1">4-(cytidine-5'-diphospho)-2-C-methyl-D-erythritol kinase</fullName>
    </alternativeName>
</protein>
<keyword id="KW-0067">ATP-binding</keyword>
<keyword id="KW-0418">Kinase</keyword>
<keyword id="KW-0547">Nucleotide-binding</keyword>
<keyword id="KW-0808">Transferase</keyword>
<sequence>MIYETAPAKINFTLDTLFKRNDGYHEIEMIMTTVDLNDRLTFHKRKDRKIVVEIEHNYVPSNHKNLAYRAAQLFIEQYQLKQGVTISIDKEIPVSAGLAGGSADAAATLRGLNRLFDIGASLEELALLGSKIGTDIPFCIYNKTALCTGRGEKIEFLNKPPSAWVILAKPNLGISSPDIFKLINLDKRYDVHTKMCYEALENRDYQQLCQSLSNRLEPISVSKHPQIDKLKNNMLKSGADGALMSGSGPTVYGLARKESQAKNIYNAVNGCCNEVYLVRLLG</sequence>
<accession>Q2FJE7</accession>
<feature type="chain" id="PRO_0000235135" description="Putative 4-diphosphocytidyl-2-C-methyl-D-erythritol kinase">
    <location>
        <begin position="1"/>
        <end position="282"/>
    </location>
</feature>
<feature type="active site" evidence="1">
    <location>
        <position position="9"/>
    </location>
</feature>
<feature type="active site" evidence="1">
    <location>
        <position position="135"/>
    </location>
</feature>
<feature type="binding site" evidence="1">
    <location>
        <begin position="93"/>
        <end position="103"/>
    </location>
    <ligand>
        <name>ATP</name>
        <dbReference type="ChEBI" id="CHEBI:30616"/>
    </ligand>
</feature>
<comment type="function">
    <text evidence="1">Catalyzes the phosphorylation of the position 2 hydroxy group of 4-diphosphocytidyl-2C-methyl-D-erythritol.</text>
</comment>
<comment type="catalytic activity">
    <reaction evidence="1">
        <text>4-CDP-2-C-methyl-D-erythritol + ATP = 4-CDP-2-C-methyl-D-erythritol 2-phosphate + ADP + H(+)</text>
        <dbReference type="Rhea" id="RHEA:18437"/>
        <dbReference type="ChEBI" id="CHEBI:15378"/>
        <dbReference type="ChEBI" id="CHEBI:30616"/>
        <dbReference type="ChEBI" id="CHEBI:57823"/>
        <dbReference type="ChEBI" id="CHEBI:57919"/>
        <dbReference type="ChEBI" id="CHEBI:456216"/>
        <dbReference type="EC" id="2.7.1.148"/>
    </reaction>
</comment>
<comment type="similarity">
    <text evidence="1">Belongs to the GHMP kinase family. IspE subfamily.</text>
</comment>
<name>ISPE_STAA3</name>
<reference key="1">
    <citation type="journal article" date="2006" name="Lancet">
        <title>Complete genome sequence of USA300, an epidemic clone of community-acquired meticillin-resistant Staphylococcus aureus.</title>
        <authorList>
            <person name="Diep B.A."/>
            <person name="Gill S.R."/>
            <person name="Chang R.F."/>
            <person name="Phan T.H."/>
            <person name="Chen J.H."/>
            <person name="Davidson M.G."/>
            <person name="Lin F."/>
            <person name="Lin J."/>
            <person name="Carleton H.A."/>
            <person name="Mongodin E.F."/>
            <person name="Sensabaugh G.F."/>
            <person name="Perdreau-Remington F."/>
        </authorList>
    </citation>
    <scope>NUCLEOTIDE SEQUENCE [LARGE SCALE GENOMIC DNA]</scope>
    <source>
        <strain>USA300</strain>
    </source>
</reference>
<evidence type="ECO:0000255" key="1">
    <source>
        <dbReference type="HAMAP-Rule" id="MF_00061"/>
    </source>
</evidence>
<dbReference type="EC" id="2.7.1.148" evidence="1"/>
<dbReference type="EMBL" id="CP000255">
    <property type="protein sequence ID" value="ABD21994.1"/>
    <property type="molecule type" value="Genomic_DNA"/>
</dbReference>
<dbReference type="RefSeq" id="WP_000638870.1">
    <property type="nucleotide sequence ID" value="NZ_CP027476.1"/>
</dbReference>
<dbReference type="SMR" id="Q2FJE7"/>
<dbReference type="KEGG" id="saa:SAUSA300_0472"/>
<dbReference type="HOGENOM" id="CLU_053057_1_1_9"/>
<dbReference type="Proteomes" id="UP000001939">
    <property type="component" value="Chromosome"/>
</dbReference>
<dbReference type="GO" id="GO:0050515">
    <property type="term" value="F:4-(cytidine 5'-diphospho)-2-C-methyl-D-erythritol kinase activity"/>
    <property type="evidence" value="ECO:0007669"/>
    <property type="project" value="UniProtKB-UniRule"/>
</dbReference>
<dbReference type="GO" id="GO:0005524">
    <property type="term" value="F:ATP binding"/>
    <property type="evidence" value="ECO:0007669"/>
    <property type="project" value="UniProtKB-UniRule"/>
</dbReference>
<dbReference type="GO" id="GO:0016114">
    <property type="term" value="P:terpenoid biosynthetic process"/>
    <property type="evidence" value="ECO:0007669"/>
    <property type="project" value="InterPro"/>
</dbReference>
<dbReference type="FunFam" id="3.30.230.10:FF:000029">
    <property type="entry name" value="4-diphosphocytidyl-2-C-methyl-D-erythritol kinase"/>
    <property type="match status" value="1"/>
</dbReference>
<dbReference type="FunFam" id="3.30.70.890:FF:000006">
    <property type="entry name" value="4-diphosphocytidyl-2-C-methyl-D-erythritol kinase"/>
    <property type="match status" value="1"/>
</dbReference>
<dbReference type="Gene3D" id="3.30.230.10">
    <property type="match status" value="1"/>
</dbReference>
<dbReference type="Gene3D" id="3.30.70.890">
    <property type="entry name" value="GHMP kinase, C-terminal domain"/>
    <property type="match status" value="1"/>
</dbReference>
<dbReference type="HAMAP" id="MF_00061">
    <property type="entry name" value="IspE"/>
    <property type="match status" value="1"/>
</dbReference>
<dbReference type="InterPro" id="IPR013750">
    <property type="entry name" value="GHMP_kinase_C_dom"/>
</dbReference>
<dbReference type="InterPro" id="IPR036554">
    <property type="entry name" value="GHMP_kinase_C_sf"/>
</dbReference>
<dbReference type="InterPro" id="IPR006204">
    <property type="entry name" value="GHMP_kinase_N_dom"/>
</dbReference>
<dbReference type="InterPro" id="IPR004424">
    <property type="entry name" value="IspE"/>
</dbReference>
<dbReference type="InterPro" id="IPR020568">
    <property type="entry name" value="Ribosomal_Su5_D2-typ_SF"/>
</dbReference>
<dbReference type="InterPro" id="IPR014721">
    <property type="entry name" value="Ribsml_uS5_D2-typ_fold_subgr"/>
</dbReference>
<dbReference type="NCBIfam" id="TIGR00154">
    <property type="entry name" value="ispE"/>
    <property type="match status" value="1"/>
</dbReference>
<dbReference type="PANTHER" id="PTHR43527">
    <property type="entry name" value="4-DIPHOSPHOCYTIDYL-2-C-METHYL-D-ERYTHRITOL KINASE, CHLOROPLASTIC"/>
    <property type="match status" value="1"/>
</dbReference>
<dbReference type="PANTHER" id="PTHR43527:SF2">
    <property type="entry name" value="4-DIPHOSPHOCYTIDYL-2-C-METHYL-D-ERYTHRITOL KINASE, CHLOROPLASTIC"/>
    <property type="match status" value="1"/>
</dbReference>
<dbReference type="Pfam" id="PF08544">
    <property type="entry name" value="GHMP_kinases_C"/>
    <property type="match status" value="1"/>
</dbReference>
<dbReference type="Pfam" id="PF00288">
    <property type="entry name" value="GHMP_kinases_N"/>
    <property type="match status" value="1"/>
</dbReference>
<dbReference type="PIRSF" id="PIRSF010376">
    <property type="entry name" value="IspE"/>
    <property type="match status" value="1"/>
</dbReference>
<dbReference type="SUPFAM" id="SSF55060">
    <property type="entry name" value="GHMP Kinase, C-terminal domain"/>
    <property type="match status" value="1"/>
</dbReference>
<dbReference type="SUPFAM" id="SSF54211">
    <property type="entry name" value="Ribosomal protein S5 domain 2-like"/>
    <property type="match status" value="1"/>
</dbReference>
<gene>
    <name type="primary">ispE</name>
    <name type="ordered locus">SAUSA300_0472</name>
</gene>
<proteinExistence type="inferred from homology"/>
<organism>
    <name type="scientific">Staphylococcus aureus (strain USA300)</name>
    <dbReference type="NCBI Taxonomy" id="367830"/>
    <lineage>
        <taxon>Bacteria</taxon>
        <taxon>Bacillati</taxon>
        <taxon>Bacillota</taxon>
        <taxon>Bacilli</taxon>
        <taxon>Bacillales</taxon>
        <taxon>Staphylococcaceae</taxon>
        <taxon>Staphylococcus</taxon>
    </lineage>
</organism>